<protein>
    <recommendedName>
        <fullName>Ferritin heavy chain B</fullName>
        <shortName>Ferritin H subunit B</shortName>
        <ecNumber evidence="2">1.16.3.1</ecNumber>
    </recommendedName>
    <alternativeName>
        <fullName>Ferritin heavy chain 1</fullName>
    </alternativeName>
</protein>
<feature type="chain" id="PRO_0000201077" description="Ferritin heavy chain B">
    <location>
        <begin position="1"/>
        <end position="176"/>
    </location>
</feature>
<feature type="domain" description="Ferritin-like diiron" evidence="4">
    <location>
        <begin position="7"/>
        <end position="156"/>
    </location>
</feature>
<feature type="binding site" evidence="4">
    <location>
        <position position="24"/>
    </location>
    <ligand>
        <name>Fe cation</name>
        <dbReference type="ChEBI" id="CHEBI:24875"/>
        <label>1</label>
    </ligand>
</feature>
<feature type="binding site" evidence="4">
    <location>
        <position position="59"/>
    </location>
    <ligand>
        <name>Fe cation</name>
        <dbReference type="ChEBI" id="CHEBI:24875"/>
        <label>1</label>
    </ligand>
</feature>
<feature type="binding site" evidence="4">
    <location>
        <position position="59"/>
    </location>
    <ligand>
        <name>Fe cation</name>
        <dbReference type="ChEBI" id="CHEBI:24875"/>
        <label>2</label>
    </ligand>
</feature>
<feature type="binding site" evidence="4">
    <location>
        <position position="62"/>
    </location>
    <ligand>
        <name>Fe cation</name>
        <dbReference type="ChEBI" id="CHEBI:24875"/>
        <label>1</label>
    </ligand>
</feature>
<feature type="binding site" evidence="4">
    <location>
        <position position="104"/>
    </location>
    <ligand>
        <name>Fe cation</name>
        <dbReference type="ChEBI" id="CHEBI:24875"/>
        <label>2</label>
    </ligand>
</feature>
<feature type="binding site" evidence="4">
    <location>
        <position position="138"/>
    </location>
    <ligand>
        <name>Fe cation</name>
        <dbReference type="ChEBI" id="CHEBI:24875"/>
        <label>2</label>
    </ligand>
</feature>
<feature type="sequence conflict" description="In Ref. 1; CAA35760." evidence="5" ref="1">
    <original>R</original>
    <variation>L</variation>
    <location>
        <position position="6"/>
    </location>
</feature>
<feature type="sequence conflict" description="In Ref. 1; CAA35760." evidence="5" ref="1">
    <original>A</original>
    <variation>I</variation>
    <location>
        <position position="15"/>
    </location>
</feature>
<feature type="sequence conflict" description="In Ref. 1; CAA35760." evidence="5" ref="1">
    <original>VP</original>
    <variation>A</variation>
    <location>
        <begin position="157"/>
        <end position="158"/>
    </location>
</feature>
<dbReference type="EC" id="1.16.3.1" evidence="2"/>
<dbReference type="EMBL" id="X51395">
    <property type="protein sequence ID" value="CAA35760.1"/>
    <property type="molecule type" value="mRNA"/>
</dbReference>
<dbReference type="EMBL" id="M55010">
    <property type="protein sequence ID" value="AAA49708.1"/>
    <property type="molecule type" value="mRNA"/>
</dbReference>
<dbReference type="EMBL" id="BC044961">
    <property type="protein sequence ID" value="AAH44961.1"/>
    <property type="molecule type" value="mRNA"/>
</dbReference>
<dbReference type="EMBL" id="BC170380">
    <property type="protein sequence ID" value="AAI70380.1"/>
    <property type="molecule type" value="mRNA"/>
</dbReference>
<dbReference type="EMBL" id="BC170382">
    <property type="protein sequence ID" value="AAI70382.1"/>
    <property type="molecule type" value="mRNA"/>
</dbReference>
<dbReference type="PIR" id="A37959">
    <property type="entry name" value="FRXL"/>
</dbReference>
<dbReference type="SMR" id="P17663"/>
<dbReference type="DNASU" id="379267"/>
<dbReference type="GeneID" id="379267"/>
<dbReference type="KEGG" id="xla:379267"/>
<dbReference type="AGR" id="Xenbase:XB-GENE-6256345"/>
<dbReference type="CTD" id="379267"/>
<dbReference type="Xenbase" id="XB-GENE-6256345">
    <property type="gene designation" value="fth1.S"/>
</dbReference>
<dbReference type="OrthoDB" id="186462at2759"/>
<dbReference type="Proteomes" id="UP000186698">
    <property type="component" value="Chromosome 7S"/>
</dbReference>
<dbReference type="Bgee" id="379267">
    <property type="expression patterns" value="Expressed in intestine and 19 other cell types or tissues"/>
</dbReference>
<dbReference type="GO" id="GO:0005737">
    <property type="term" value="C:cytoplasm"/>
    <property type="evidence" value="ECO:0000318"/>
    <property type="project" value="GO_Central"/>
</dbReference>
<dbReference type="GO" id="GO:0008199">
    <property type="term" value="F:ferric iron binding"/>
    <property type="evidence" value="ECO:0000318"/>
    <property type="project" value="GO_Central"/>
</dbReference>
<dbReference type="GO" id="GO:0008198">
    <property type="term" value="F:ferrous iron binding"/>
    <property type="evidence" value="ECO:0000318"/>
    <property type="project" value="GO_Central"/>
</dbReference>
<dbReference type="GO" id="GO:0004322">
    <property type="term" value="F:ferroxidase activity"/>
    <property type="evidence" value="ECO:0007669"/>
    <property type="project" value="UniProtKB-EC"/>
</dbReference>
<dbReference type="GO" id="GO:0006879">
    <property type="term" value="P:intracellular iron ion homeostasis"/>
    <property type="evidence" value="ECO:0007669"/>
    <property type="project" value="UniProtKB-KW"/>
</dbReference>
<dbReference type="GO" id="GO:0006826">
    <property type="term" value="P:iron ion transport"/>
    <property type="evidence" value="ECO:0007669"/>
    <property type="project" value="InterPro"/>
</dbReference>
<dbReference type="GO" id="GO:0110076">
    <property type="term" value="P:negative regulation of ferroptosis"/>
    <property type="evidence" value="ECO:0000250"/>
    <property type="project" value="UniProtKB"/>
</dbReference>
<dbReference type="CDD" id="cd01056">
    <property type="entry name" value="Euk_Ferritin"/>
    <property type="match status" value="1"/>
</dbReference>
<dbReference type="FunFam" id="1.20.1260.10:FF:000002">
    <property type="entry name" value="Ferritin, mitochondrial"/>
    <property type="match status" value="1"/>
</dbReference>
<dbReference type="Gene3D" id="1.20.1260.10">
    <property type="match status" value="1"/>
</dbReference>
<dbReference type="InterPro" id="IPR001519">
    <property type="entry name" value="Ferritin"/>
</dbReference>
<dbReference type="InterPro" id="IPR012347">
    <property type="entry name" value="Ferritin-like"/>
</dbReference>
<dbReference type="InterPro" id="IPR009040">
    <property type="entry name" value="Ferritin-like_diiron"/>
</dbReference>
<dbReference type="InterPro" id="IPR009078">
    <property type="entry name" value="Ferritin-like_SF"/>
</dbReference>
<dbReference type="InterPro" id="IPR014034">
    <property type="entry name" value="Ferritin_CS"/>
</dbReference>
<dbReference type="InterPro" id="IPR008331">
    <property type="entry name" value="Ferritin_DPS_dom"/>
</dbReference>
<dbReference type="PANTHER" id="PTHR11431">
    <property type="entry name" value="FERRITIN"/>
    <property type="match status" value="1"/>
</dbReference>
<dbReference type="PANTHER" id="PTHR11431:SF54">
    <property type="entry name" value="FERRITIN"/>
    <property type="match status" value="1"/>
</dbReference>
<dbReference type="Pfam" id="PF00210">
    <property type="entry name" value="Ferritin"/>
    <property type="match status" value="1"/>
</dbReference>
<dbReference type="SUPFAM" id="SSF47240">
    <property type="entry name" value="Ferritin-like"/>
    <property type="match status" value="1"/>
</dbReference>
<dbReference type="PROSITE" id="PS00540">
    <property type="entry name" value="FERRITIN_1"/>
    <property type="match status" value="1"/>
</dbReference>
<dbReference type="PROSITE" id="PS00204">
    <property type="entry name" value="FERRITIN_2"/>
    <property type="match status" value="1"/>
</dbReference>
<dbReference type="PROSITE" id="PS50905">
    <property type="entry name" value="FERRITIN_LIKE"/>
    <property type="match status" value="1"/>
</dbReference>
<reference key="1">
    <citation type="journal article" date="1990" name="Nucleic Acids Res.">
        <title>Sequence of Xenopus laevis ferritin mRNA.</title>
        <authorList>
            <person name="Moskaitis J.E."/>
            <person name="Pastori R.L."/>
            <person name="Schoenberg D."/>
        </authorList>
    </citation>
    <scope>NUCLEOTIDE SEQUENCE [MRNA]</scope>
</reference>
<reference key="2">
    <citation type="journal article" date="1991" name="Biochemistry">
        <title>Xenopus liver ferritin H subunit: cDNA sequence and mRNA production in the liver following estrogen treatment.</title>
        <authorList>
            <person name="Holland L.J."/>
            <person name="Wall A.A."/>
            <person name="Bhattacharya A."/>
        </authorList>
    </citation>
    <scope>NUCLEOTIDE SEQUENCE [MRNA]</scope>
    <source>
        <tissue>Liver</tissue>
    </source>
</reference>
<reference key="3">
    <citation type="submission" date="2008-11" db="EMBL/GenBank/DDBJ databases">
        <authorList>
            <consortium name="NIH - Xenopus Gene Collection (XGC) project"/>
        </authorList>
    </citation>
    <scope>NUCLEOTIDE SEQUENCE [LARGE SCALE MRNA]</scope>
    <source>
        <tissue>Embryo</tissue>
        <tissue>Tail bud</tissue>
    </source>
</reference>
<evidence type="ECO:0000250" key="1"/>
<evidence type="ECO:0000250" key="2">
    <source>
        <dbReference type="UniProtKB" id="P02794"/>
    </source>
</evidence>
<evidence type="ECO:0000250" key="3">
    <source>
        <dbReference type="UniProtKB" id="P19130"/>
    </source>
</evidence>
<evidence type="ECO:0000255" key="4">
    <source>
        <dbReference type="PROSITE-ProRule" id="PRU00085"/>
    </source>
</evidence>
<evidence type="ECO:0000305" key="5"/>
<accession>P17663</accession>
<accession>B7ZS33</accession>
<accession>Q66LL5</accession>
<comment type="function">
    <text evidence="2">Stores iron in a soluble, non-toxic, readily available form. Important for iron homeostasis. Has ferroxidase activity. Iron is taken up in the ferrous form and deposited as ferric hydroxides after oxidation.</text>
</comment>
<comment type="catalytic activity">
    <reaction evidence="2">
        <text>4 Fe(2+) + O2 + 4 H(+) = 4 Fe(3+) + 2 H2O</text>
        <dbReference type="Rhea" id="RHEA:11148"/>
        <dbReference type="ChEBI" id="CHEBI:15377"/>
        <dbReference type="ChEBI" id="CHEBI:15378"/>
        <dbReference type="ChEBI" id="CHEBI:15379"/>
        <dbReference type="ChEBI" id="CHEBI:29033"/>
        <dbReference type="ChEBI" id="CHEBI:29034"/>
        <dbReference type="EC" id="1.16.3.1"/>
    </reaction>
</comment>
<comment type="subunit">
    <text evidence="2">Oligomer of 24 subunits. There are two types of subunits: L (light) chain and H (heavy) chain. The functional molecule is roughly spherical and contains a central cavity into which the insoluble mineral iron core is deposited.</text>
</comment>
<comment type="subcellular location">
    <subcellularLocation>
        <location evidence="3">Cytoplasm</location>
    </subcellularLocation>
</comment>
<comment type="miscellaneous">
    <text evidence="1">There are three types of ferritin subunits in amphibia: L, M and H chains. M and H chains are fast mineralizing; the L chain is very slow mineralizing (By similarity).</text>
</comment>
<comment type="similarity">
    <text evidence="5">Belongs to the ferritin family.</text>
</comment>
<sequence length="176" mass="20563">MQSQVRQNFNSDCEAAINRMVNLEMYASYVYLSMSYYFDRDDVALHHVAKFFKEQSHEEREHAEKFLKYQNKRGGRVVLQDIKKPERDEWSNTLEAMQAALQLEKTVNQALLDLHKLASDKVDPQLCDFLESEYLEEQVKAMKELGDYITNLKRLGVPQNGMGEYLFDKHTLGESS</sequence>
<name>FRIHB_XENLA</name>
<organism>
    <name type="scientific">Xenopus laevis</name>
    <name type="common">African clawed frog</name>
    <dbReference type="NCBI Taxonomy" id="8355"/>
    <lineage>
        <taxon>Eukaryota</taxon>
        <taxon>Metazoa</taxon>
        <taxon>Chordata</taxon>
        <taxon>Craniata</taxon>
        <taxon>Vertebrata</taxon>
        <taxon>Euteleostomi</taxon>
        <taxon>Amphibia</taxon>
        <taxon>Batrachia</taxon>
        <taxon>Anura</taxon>
        <taxon>Pipoidea</taxon>
        <taxon>Pipidae</taxon>
        <taxon>Xenopodinae</taxon>
        <taxon>Xenopus</taxon>
        <taxon>Xenopus</taxon>
    </lineage>
</organism>
<keyword id="KW-0963">Cytoplasm</keyword>
<keyword id="KW-0408">Iron</keyword>
<keyword id="KW-0409">Iron storage</keyword>
<keyword id="KW-0479">Metal-binding</keyword>
<keyword id="KW-0560">Oxidoreductase</keyword>
<keyword id="KW-1185">Reference proteome</keyword>
<proteinExistence type="evidence at transcript level"/>
<gene>
    <name type="primary">fth1-b</name>
</gene>